<dbReference type="EC" id="2.3.1.274" evidence="1"/>
<dbReference type="EMBL" id="CP001233">
    <property type="protein sequence ID" value="ACP06251.1"/>
    <property type="molecule type" value="Genomic_DNA"/>
</dbReference>
<dbReference type="RefSeq" id="WP_001180565.1">
    <property type="nucleotide sequence ID" value="NC_012578.1"/>
</dbReference>
<dbReference type="SMR" id="C3LNX5"/>
<dbReference type="KEGG" id="vcm:VCM66_1948"/>
<dbReference type="HOGENOM" id="CLU_039379_1_0_6"/>
<dbReference type="UniPathway" id="UPA00085"/>
<dbReference type="Proteomes" id="UP000001217">
    <property type="component" value="Chromosome I"/>
</dbReference>
<dbReference type="GO" id="GO:0005737">
    <property type="term" value="C:cytoplasm"/>
    <property type="evidence" value="ECO:0007669"/>
    <property type="project" value="UniProtKB-SubCell"/>
</dbReference>
<dbReference type="GO" id="GO:0043811">
    <property type="term" value="F:phosphate:acyl-[acyl carrier protein] acyltransferase activity"/>
    <property type="evidence" value="ECO:0007669"/>
    <property type="project" value="UniProtKB-UniRule"/>
</dbReference>
<dbReference type="GO" id="GO:0006633">
    <property type="term" value="P:fatty acid biosynthetic process"/>
    <property type="evidence" value="ECO:0007669"/>
    <property type="project" value="UniProtKB-UniRule"/>
</dbReference>
<dbReference type="GO" id="GO:0008654">
    <property type="term" value="P:phospholipid biosynthetic process"/>
    <property type="evidence" value="ECO:0007669"/>
    <property type="project" value="UniProtKB-KW"/>
</dbReference>
<dbReference type="FunFam" id="3.40.718.10:FF:000008">
    <property type="entry name" value="Phosphate acyltransferase"/>
    <property type="match status" value="1"/>
</dbReference>
<dbReference type="Gene3D" id="3.40.718.10">
    <property type="entry name" value="Isopropylmalate Dehydrogenase"/>
    <property type="match status" value="1"/>
</dbReference>
<dbReference type="HAMAP" id="MF_00019">
    <property type="entry name" value="PlsX"/>
    <property type="match status" value="1"/>
</dbReference>
<dbReference type="InterPro" id="IPR003664">
    <property type="entry name" value="FA_synthesis"/>
</dbReference>
<dbReference type="InterPro" id="IPR012281">
    <property type="entry name" value="Phospholipid_synth_PlsX-like"/>
</dbReference>
<dbReference type="NCBIfam" id="TIGR00182">
    <property type="entry name" value="plsX"/>
    <property type="match status" value="1"/>
</dbReference>
<dbReference type="PANTHER" id="PTHR30100">
    <property type="entry name" value="FATTY ACID/PHOSPHOLIPID SYNTHESIS PROTEIN PLSX"/>
    <property type="match status" value="1"/>
</dbReference>
<dbReference type="PANTHER" id="PTHR30100:SF1">
    <property type="entry name" value="PHOSPHATE ACYLTRANSFERASE"/>
    <property type="match status" value="1"/>
</dbReference>
<dbReference type="Pfam" id="PF02504">
    <property type="entry name" value="FA_synthesis"/>
    <property type="match status" value="1"/>
</dbReference>
<dbReference type="PIRSF" id="PIRSF002465">
    <property type="entry name" value="Phsphlp_syn_PlsX"/>
    <property type="match status" value="1"/>
</dbReference>
<dbReference type="SUPFAM" id="SSF53659">
    <property type="entry name" value="Isocitrate/Isopropylmalate dehydrogenase-like"/>
    <property type="match status" value="1"/>
</dbReference>
<sequence length="341" mass="36482">MQNLTVALDAMGGDFGPRVTVPAAVQALSHFPELKVILVGDQHQITQQLSLLGYSADTRLSIVHSDRVISNSEKPSLALRHSAGSSMGMAIDLVAENQADACVSGGNTGALMALSRFRLKLLPGIDRPALVSALPTISGRKTWMLDLGANVSSDADSLFQFAVMGAALAEQHLQQAPRVAILNIGAEEIKGNDLVKRCAEMLTQTQAINFIGYIEGNQLLTDAADVIVCDGFVGNVCLKACEGTAQLFIDKLKKSLLASSIKGWIARKLFSELFTELKTLNPDQYNGASLLGLRGIVIKSHGSADVSAVVNAISEAVHEVKRQVPSRISDRLEAVLLERHY</sequence>
<proteinExistence type="inferred from homology"/>
<accession>C3LNX5</accession>
<reference key="1">
    <citation type="journal article" date="2008" name="PLoS ONE">
        <title>A recalibrated molecular clock and independent origins for the cholera pandemic clones.</title>
        <authorList>
            <person name="Feng L."/>
            <person name="Reeves P.R."/>
            <person name="Lan R."/>
            <person name="Ren Y."/>
            <person name="Gao C."/>
            <person name="Zhou Z."/>
            <person name="Ren Y."/>
            <person name="Cheng J."/>
            <person name="Wang W."/>
            <person name="Wang J."/>
            <person name="Qian W."/>
            <person name="Li D."/>
            <person name="Wang L."/>
        </authorList>
    </citation>
    <scope>NUCLEOTIDE SEQUENCE [LARGE SCALE GENOMIC DNA]</scope>
    <source>
        <strain>M66-2</strain>
    </source>
</reference>
<protein>
    <recommendedName>
        <fullName evidence="1">Phosphate acyltransferase</fullName>
        <ecNumber evidence="1">2.3.1.274</ecNumber>
    </recommendedName>
    <alternativeName>
        <fullName evidence="1">Acyl-ACP phosphotransacylase</fullName>
    </alternativeName>
    <alternativeName>
        <fullName evidence="1">Acyl-[acyl-carrier-protein]--phosphate acyltransferase</fullName>
    </alternativeName>
    <alternativeName>
        <fullName evidence="1">Phosphate-acyl-ACP acyltransferase</fullName>
    </alternativeName>
</protein>
<evidence type="ECO:0000255" key="1">
    <source>
        <dbReference type="HAMAP-Rule" id="MF_00019"/>
    </source>
</evidence>
<organism>
    <name type="scientific">Vibrio cholerae serotype O1 (strain M66-2)</name>
    <dbReference type="NCBI Taxonomy" id="579112"/>
    <lineage>
        <taxon>Bacteria</taxon>
        <taxon>Pseudomonadati</taxon>
        <taxon>Pseudomonadota</taxon>
        <taxon>Gammaproteobacteria</taxon>
        <taxon>Vibrionales</taxon>
        <taxon>Vibrionaceae</taxon>
        <taxon>Vibrio</taxon>
    </lineage>
</organism>
<feature type="chain" id="PRO_1000193155" description="Phosphate acyltransferase">
    <location>
        <begin position="1"/>
        <end position="341"/>
    </location>
</feature>
<comment type="function">
    <text evidence="1">Catalyzes the reversible formation of acyl-phosphate (acyl-PO(4)) from acyl-[acyl-carrier-protein] (acyl-ACP). This enzyme utilizes acyl-ACP as fatty acyl donor, but not acyl-CoA.</text>
</comment>
<comment type="catalytic activity">
    <reaction evidence="1">
        <text>a fatty acyl-[ACP] + phosphate = an acyl phosphate + holo-[ACP]</text>
        <dbReference type="Rhea" id="RHEA:42292"/>
        <dbReference type="Rhea" id="RHEA-COMP:9685"/>
        <dbReference type="Rhea" id="RHEA-COMP:14125"/>
        <dbReference type="ChEBI" id="CHEBI:43474"/>
        <dbReference type="ChEBI" id="CHEBI:59918"/>
        <dbReference type="ChEBI" id="CHEBI:64479"/>
        <dbReference type="ChEBI" id="CHEBI:138651"/>
        <dbReference type="EC" id="2.3.1.274"/>
    </reaction>
</comment>
<comment type="pathway">
    <text evidence="1">Lipid metabolism; phospholipid metabolism.</text>
</comment>
<comment type="subunit">
    <text evidence="1">Homodimer. Probably interacts with PlsY.</text>
</comment>
<comment type="subcellular location">
    <subcellularLocation>
        <location evidence="1">Cytoplasm</location>
    </subcellularLocation>
    <text evidence="1">Associated with the membrane possibly through PlsY.</text>
</comment>
<comment type="similarity">
    <text evidence="1">Belongs to the PlsX family.</text>
</comment>
<name>PLSX_VIBCM</name>
<gene>
    <name evidence="1" type="primary">plsX</name>
    <name type="ordered locus">VCM66_1948</name>
</gene>
<keyword id="KW-0963">Cytoplasm</keyword>
<keyword id="KW-0444">Lipid biosynthesis</keyword>
<keyword id="KW-0443">Lipid metabolism</keyword>
<keyword id="KW-0594">Phospholipid biosynthesis</keyword>
<keyword id="KW-1208">Phospholipid metabolism</keyword>
<keyword id="KW-0808">Transferase</keyword>